<reference key="1">
    <citation type="submission" date="2008-10" db="EMBL/GenBank/DDBJ databases">
        <title>Genome sequence of Bacillus cereus AH187.</title>
        <authorList>
            <person name="Dodson R.J."/>
            <person name="Durkin A.S."/>
            <person name="Rosovitz M.J."/>
            <person name="Rasko D.A."/>
            <person name="Kolsto A.B."/>
            <person name="Okstad O.A."/>
            <person name="Ravel J."/>
            <person name="Sutton G."/>
        </authorList>
    </citation>
    <scope>NUCLEOTIDE SEQUENCE [LARGE SCALE GENOMIC DNA]</scope>
    <source>
        <strain>AH187</strain>
    </source>
</reference>
<sequence length="90" mass="10118">MAVKIRLKRMGAKKTPFYRVVVADSRSPRDGRFIEEIGTYNPVAQPAEVKINEEAALKWLGNGAKPSDTVRNLFSNQGIMEKFHLSKQGK</sequence>
<proteinExistence type="inferred from homology"/>
<comment type="similarity">
    <text evidence="1">Belongs to the bacterial ribosomal protein bS16 family.</text>
</comment>
<protein>
    <recommendedName>
        <fullName evidence="1">Small ribosomal subunit protein bS16</fullName>
    </recommendedName>
    <alternativeName>
        <fullName evidence="2">30S ribosomal protein S16</fullName>
    </alternativeName>
</protein>
<feature type="chain" id="PRO_1000196331" description="Small ribosomal subunit protein bS16">
    <location>
        <begin position="1"/>
        <end position="90"/>
    </location>
</feature>
<evidence type="ECO:0000255" key="1">
    <source>
        <dbReference type="HAMAP-Rule" id="MF_00385"/>
    </source>
</evidence>
<evidence type="ECO:0000305" key="2"/>
<dbReference type="EMBL" id="CP001177">
    <property type="protein sequence ID" value="ACJ80447.1"/>
    <property type="molecule type" value="Genomic_DNA"/>
</dbReference>
<dbReference type="SMR" id="B7HLH7"/>
<dbReference type="KEGG" id="bcr:BCAH187_A3892"/>
<dbReference type="HOGENOM" id="CLU_100590_5_0_9"/>
<dbReference type="Proteomes" id="UP000002214">
    <property type="component" value="Chromosome"/>
</dbReference>
<dbReference type="GO" id="GO:0005737">
    <property type="term" value="C:cytoplasm"/>
    <property type="evidence" value="ECO:0007669"/>
    <property type="project" value="UniProtKB-ARBA"/>
</dbReference>
<dbReference type="GO" id="GO:0015935">
    <property type="term" value="C:small ribosomal subunit"/>
    <property type="evidence" value="ECO:0007669"/>
    <property type="project" value="TreeGrafter"/>
</dbReference>
<dbReference type="GO" id="GO:0003735">
    <property type="term" value="F:structural constituent of ribosome"/>
    <property type="evidence" value="ECO:0007669"/>
    <property type="project" value="InterPro"/>
</dbReference>
<dbReference type="GO" id="GO:0006412">
    <property type="term" value="P:translation"/>
    <property type="evidence" value="ECO:0007669"/>
    <property type="project" value="UniProtKB-UniRule"/>
</dbReference>
<dbReference type="FunFam" id="3.30.1320.10:FF:000002">
    <property type="entry name" value="30S ribosomal protein S16"/>
    <property type="match status" value="1"/>
</dbReference>
<dbReference type="Gene3D" id="3.30.1320.10">
    <property type="match status" value="1"/>
</dbReference>
<dbReference type="HAMAP" id="MF_00385">
    <property type="entry name" value="Ribosomal_bS16"/>
    <property type="match status" value="1"/>
</dbReference>
<dbReference type="InterPro" id="IPR000307">
    <property type="entry name" value="Ribosomal_bS16"/>
</dbReference>
<dbReference type="InterPro" id="IPR020592">
    <property type="entry name" value="Ribosomal_bS16_CS"/>
</dbReference>
<dbReference type="InterPro" id="IPR023803">
    <property type="entry name" value="Ribosomal_bS16_dom_sf"/>
</dbReference>
<dbReference type="NCBIfam" id="TIGR00002">
    <property type="entry name" value="S16"/>
    <property type="match status" value="1"/>
</dbReference>
<dbReference type="PANTHER" id="PTHR12919">
    <property type="entry name" value="30S RIBOSOMAL PROTEIN S16"/>
    <property type="match status" value="1"/>
</dbReference>
<dbReference type="PANTHER" id="PTHR12919:SF20">
    <property type="entry name" value="SMALL RIBOSOMAL SUBUNIT PROTEIN BS16M"/>
    <property type="match status" value="1"/>
</dbReference>
<dbReference type="Pfam" id="PF00886">
    <property type="entry name" value="Ribosomal_S16"/>
    <property type="match status" value="1"/>
</dbReference>
<dbReference type="SUPFAM" id="SSF54565">
    <property type="entry name" value="Ribosomal protein S16"/>
    <property type="match status" value="1"/>
</dbReference>
<dbReference type="PROSITE" id="PS00732">
    <property type="entry name" value="RIBOSOMAL_S16"/>
    <property type="match status" value="1"/>
</dbReference>
<gene>
    <name evidence="1" type="primary">rpsP</name>
    <name type="ordered locus">BCAH187_A3892</name>
</gene>
<name>RS16_BACC7</name>
<keyword id="KW-0687">Ribonucleoprotein</keyword>
<keyword id="KW-0689">Ribosomal protein</keyword>
<accession>B7HLH7</accession>
<organism>
    <name type="scientific">Bacillus cereus (strain AH187)</name>
    <dbReference type="NCBI Taxonomy" id="405534"/>
    <lineage>
        <taxon>Bacteria</taxon>
        <taxon>Bacillati</taxon>
        <taxon>Bacillota</taxon>
        <taxon>Bacilli</taxon>
        <taxon>Bacillales</taxon>
        <taxon>Bacillaceae</taxon>
        <taxon>Bacillus</taxon>
        <taxon>Bacillus cereus group</taxon>
    </lineage>
</organism>